<feature type="chain" id="PRO_0000059556" description="Xylulose kinase">
    <location>
        <begin position="1"/>
        <end position="496"/>
    </location>
</feature>
<feature type="active site" description="Proton acceptor" evidence="1">
    <location>
        <position position="237"/>
    </location>
</feature>
<feature type="binding site" evidence="1">
    <location>
        <begin position="83"/>
        <end position="84"/>
    </location>
    <ligand>
        <name>substrate</name>
    </ligand>
</feature>
<feature type="site" description="Important for activity" evidence="1">
    <location>
        <position position="10"/>
    </location>
</feature>
<sequence>MVKEVVLGIDLGTSAIKIIAVDQLGNVIESVSETLKLYQENPGYSEQDPNEWFEATKKGIKELIQSTEMSDKIVKGISFSGQMHGLVIVDDNGIPLRKAILWNDTRNSIQCRQIEDIYGERLNYNPILEGFTLPKMLWVQQHEPEIWNRVDVFMLPKDYLRYCLTQTIHMEYSDACSTLLFNPENYEWTRDVGDTFNIGDIYPPLVKSHSYVGNVTSSLAKELGLSSDVAVYAGGGDNACGAIGAGVIHDKSALCSIGTSGVVLNVEYQRVTSYDSNLHLFNHSVPDTYYAMGVTLAAGYSLNWLKQTFFENESFEEILNLAASSKMGANGLLFTPYLAGERTPHGDAQIRGSFIGISGQHTKADFARAVIEGITYSLYDSIKIMRRAGHEMNSITSIGGGAKSRFWLQLQADIFNVQIKRLKHEEGPSMGAAILAAYGLGWFKTIESCVEAFIKVDEVFEPNNENHDLYEQYYSVYEAIYKQTKQLTADLLTITN</sequence>
<reference key="1">
    <citation type="journal article" date="2005" name="J. Bacteriol.">
        <title>Insights on evolution of virulence and resistance from the complete genome analysis of an early methicillin-resistant Staphylococcus aureus strain and a biofilm-producing methicillin-resistant Staphylococcus epidermidis strain.</title>
        <authorList>
            <person name="Gill S.R."/>
            <person name="Fouts D.E."/>
            <person name="Archer G.L."/>
            <person name="Mongodin E.F."/>
            <person name="DeBoy R.T."/>
            <person name="Ravel J."/>
            <person name="Paulsen I.T."/>
            <person name="Kolonay J.F."/>
            <person name="Brinkac L.M."/>
            <person name="Beanan M.J."/>
            <person name="Dodson R.J."/>
            <person name="Daugherty S.C."/>
            <person name="Madupu R."/>
            <person name="Angiuoli S.V."/>
            <person name="Durkin A.S."/>
            <person name="Haft D.H."/>
            <person name="Vamathevan J.J."/>
            <person name="Khouri H."/>
            <person name="Utterback T.R."/>
            <person name="Lee C."/>
            <person name="Dimitrov G."/>
            <person name="Jiang L."/>
            <person name="Qin H."/>
            <person name="Weidman J."/>
            <person name="Tran K."/>
            <person name="Kang K.H."/>
            <person name="Hance I.R."/>
            <person name="Nelson K.E."/>
            <person name="Fraser C.M."/>
        </authorList>
    </citation>
    <scope>NUCLEOTIDE SEQUENCE [LARGE SCALE GENOMIC DNA]</scope>
    <source>
        <strain>ATCC 35984 / DSM 28319 / BCRC 17069 / CCUG 31568 / BM 3577 / RP62A</strain>
    </source>
</reference>
<organism>
    <name type="scientific">Staphylococcus epidermidis (strain ATCC 35984 / DSM 28319 / BCRC 17069 / CCUG 31568 / BM 3577 / RP62A)</name>
    <dbReference type="NCBI Taxonomy" id="176279"/>
    <lineage>
        <taxon>Bacteria</taxon>
        <taxon>Bacillati</taxon>
        <taxon>Bacillota</taxon>
        <taxon>Bacilli</taxon>
        <taxon>Bacillales</taxon>
        <taxon>Staphylococcaceae</taxon>
        <taxon>Staphylococcus</taxon>
    </lineage>
</organism>
<dbReference type="EC" id="2.7.1.17" evidence="1"/>
<dbReference type="EMBL" id="CP000029">
    <property type="protein sequence ID" value="AAW52961.1"/>
    <property type="molecule type" value="Genomic_DNA"/>
</dbReference>
<dbReference type="SMR" id="Q5HL88"/>
<dbReference type="STRING" id="176279.SERP2099"/>
<dbReference type="KEGG" id="ser:SERP2099"/>
<dbReference type="eggNOG" id="COG1070">
    <property type="taxonomic scope" value="Bacteria"/>
</dbReference>
<dbReference type="HOGENOM" id="CLU_009281_3_0_9"/>
<dbReference type="Proteomes" id="UP000000531">
    <property type="component" value="Chromosome"/>
</dbReference>
<dbReference type="GO" id="GO:0005524">
    <property type="term" value="F:ATP binding"/>
    <property type="evidence" value="ECO:0007669"/>
    <property type="project" value="UniProtKB-UniRule"/>
</dbReference>
<dbReference type="GO" id="GO:0004856">
    <property type="term" value="F:D-xylulokinase activity"/>
    <property type="evidence" value="ECO:0007669"/>
    <property type="project" value="UniProtKB-UniRule"/>
</dbReference>
<dbReference type="GO" id="GO:0042732">
    <property type="term" value="P:D-xylose metabolic process"/>
    <property type="evidence" value="ECO:0007669"/>
    <property type="project" value="UniProtKB-KW"/>
</dbReference>
<dbReference type="GO" id="GO:0005998">
    <property type="term" value="P:xylulose catabolic process"/>
    <property type="evidence" value="ECO:0007669"/>
    <property type="project" value="UniProtKB-UniRule"/>
</dbReference>
<dbReference type="CDD" id="cd07808">
    <property type="entry name" value="ASKHA_NBD_FGGY_EcXK-like"/>
    <property type="match status" value="1"/>
</dbReference>
<dbReference type="Gene3D" id="3.30.420.40">
    <property type="match status" value="2"/>
</dbReference>
<dbReference type="HAMAP" id="MF_02220">
    <property type="entry name" value="XylB"/>
    <property type="match status" value="1"/>
</dbReference>
<dbReference type="InterPro" id="IPR043129">
    <property type="entry name" value="ATPase_NBD"/>
</dbReference>
<dbReference type="InterPro" id="IPR000577">
    <property type="entry name" value="Carb_kinase_FGGY"/>
</dbReference>
<dbReference type="InterPro" id="IPR018483">
    <property type="entry name" value="Carb_kinase_FGGY_CS"/>
</dbReference>
<dbReference type="InterPro" id="IPR018485">
    <property type="entry name" value="FGGY_C"/>
</dbReference>
<dbReference type="InterPro" id="IPR050406">
    <property type="entry name" value="FGGY_Carb_Kinase"/>
</dbReference>
<dbReference type="InterPro" id="IPR018484">
    <property type="entry name" value="FGGY_N"/>
</dbReference>
<dbReference type="InterPro" id="IPR006000">
    <property type="entry name" value="Xylulokinase"/>
</dbReference>
<dbReference type="NCBIfam" id="TIGR01312">
    <property type="entry name" value="XylB"/>
    <property type="match status" value="1"/>
</dbReference>
<dbReference type="PANTHER" id="PTHR43095">
    <property type="entry name" value="SUGAR KINASE"/>
    <property type="match status" value="1"/>
</dbReference>
<dbReference type="PANTHER" id="PTHR43095:SF5">
    <property type="entry name" value="XYLULOSE KINASE"/>
    <property type="match status" value="1"/>
</dbReference>
<dbReference type="Pfam" id="PF02782">
    <property type="entry name" value="FGGY_C"/>
    <property type="match status" value="1"/>
</dbReference>
<dbReference type="Pfam" id="PF00370">
    <property type="entry name" value="FGGY_N"/>
    <property type="match status" value="1"/>
</dbReference>
<dbReference type="PIRSF" id="PIRSF000538">
    <property type="entry name" value="GlpK"/>
    <property type="match status" value="1"/>
</dbReference>
<dbReference type="SUPFAM" id="SSF53067">
    <property type="entry name" value="Actin-like ATPase domain"/>
    <property type="match status" value="2"/>
</dbReference>
<dbReference type="PROSITE" id="PS00933">
    <property type="entry name" value="FGGY_KINASES_1"/>
    <property type="match status" value="1"/>
</dbReference>
<dbReference type="PROSITE" id="PS00445">
    <property type="entry name" value="FGGY_KINASES_2"/>
    <property type="match status" value="1"/>
</dbReference>
<name>XYLB_STAEQ</name>
<protein>
    <recommendedName>
        <fullName evidence="1">Xylulose kinase</fullName>
        <shortName evidence="1">Xylulokinase</shortName>
        <ecNumber evidence="1">2.7.1.17</ecNumber>
    </recommendedName>
</protein>
<keyword id="KW-0067">ATP-binding</keyword>
<keyword id="KW-0119">Carbohydrate metabolism</keyword>
<keyword id="KW-0418">Kinase</keyword>
<keyword id="KW-0547">Nucleotide-binding</keyword>
<keyword id="KW-1185">Reference proteome</keyword>
<keyword id="KW-0808">Transferase</keyword>
<keyword id="KW-0859">Xylose metabolism</keyword>
<evidence type="ECO:0000255" key="1">
    <source>
        <dbReference type="HAMAP-Rule" id="MF_02220"/>
    </source>
</evidence>
<evidence type="ECO:0000305" key="2"/>
<comment type="function">
    <text evidence="1">Catalyzes the phosphorylation of D-xylulose to D-xylulose 5-phosphate.</text>
</comment>
<comment type="catalytic activity">
    <reaction evidence="1">
        <text>D-xylulose + ATP = D-xylulose 5-phosphate + ADP + H(+)</text>
        <dbReference type="Rhea" id="RHEA:10964"/>
        <dbReference type="ChEBI" id="CHEBI:15378"/>
        <dbReference type="ChEBI" id="CHEBI:17140"/>
        <dbReference type="ChEBI" id="CHEBI:30616"/>
        <dbReference type="ChEBI" id="CHEBI:57737"/>
        <dbReference type="ChEBI" id="CHEBI:456216"/>
        <dbReference type="EC" id="2.7.1.17"/>
    </reaction>
</comment>
<comment type="similarity">
    <text evidence="1 2">Belongs to the FGGY kinase family.</text>
</comment>
<proteinExistence type="inferred from homology"/>
<accession>Q5HL88</accession>
<gene>
    <name evidence="1" type="primary">xylB</name>
    <name type="ordered locus">SERP2099</name>
</gene>